<reference key="1">
    <citation type="journal article" date="1990" name="Mol. Microbiol.">
        <title>Nucleotide sequence and organization of the upstream region of the Corynebacterium glutamicum lysA gene.</title>
        <authorList>
            <person name="Marcel T."/>
            <person name="Archer J.A.C."/>
            <person name="Mengin-Lecreulx D."/>
            <person name="Sinskey A.J."/>
        </authorList>
    </citation>
    <scope>NUCLEOTIDE SEQUENCE [GENOMIC DNA]</scope>
    <source>
        <strain>ATCC 13059 / LMG 3658 / NCIB 10332 / AS019 / 613</strain>
    </source>
</reference>
<reference key="2">
    <citation type="journal article" date="1993" name="J. Bacteriol.">
        <title>A gene encoding arginyl-tRNA synthetase is located in the upstream region of the lysA gene in Brevibacterium lactofermentum: regulation of argS-lysA cluster expression by arginine.</title>
        <authorList>
            <person name="Oguiza J.A."/>
            <person name="Malumbres M."/>
            <person name="Eriani G."/>
            <person name="Pisabarro A."/>
            <person name="Mateos L.M."/>
            <person name="Martin F."/>
            <person name="Martin J.F."/>
        </authorList>
    </citation>
    <scope>NUCLEOTIDE SEQUENCE [GENOMIC DNA]</scope>
    <scope>INDUCTION</scope>
    <source>
        <strain>ATCC 13869 / DSMZ 1412 / NCIMB 9567</strain>
    </source>
</reference>
<reference key="3">
    <citation type="journal article" date="2003" name="Appl. Microbiol. Biotechnol.">
        <title>The Corynebacterium glutamicum genome: features and impacts on biotechnological processes.</title>
        <authorList>
            <person name="Ikeda M."/>
            <person name="Nakagawa S."/>
        </authorList>
    </citation>
    <scope>NUCLEOTIDE SEQUENCE [LARGE SCALE GENOMIC DNA]</scope>
    <source>
        <strain>ATCC 13032 / DSM 20300 / JCM 1318 / BCRC 11384 / CCUG 27702 / LMG 3730 / NBRC 12168 / NCIMB 10025 / NRRL B-2784 / 534</strain>
    </source>
</reference>
<reference key="4">
    <citation type="journal article" date="2003" name="J. Biotechnol.">
        <title>The complete Corynebacterium glutamicum ATCC 13032 genome sequence and its impact on the production of L-aspartate-derived amino acids and vitamins.</title>
        <authorList>
            <person name="Kalinowski J."/>
            <person name="Bathe B."/>
            <person name="Bartels D."/>
            <person name="Bischoff N."/>
            <person name="Bott M."/>
            <person name="Burkovski A."/>
            <person name="Dusch N."/>
            <person name="Eggeling L."/>
            <person name="Eikmanns B.J."/>
            <person name="Gaigalat L."/>
            <person name="Goesmann A."/>
            <person name="Hartmann M."/>
            <person name="Huthmacher K."/>
            <person name="Kraemer R."/>
            <person name="Linke B."/>
            <person name="McHardy A.C."/>
            <person name="Meyer F."/>
            <person name="Moeckel B."/>
            <person name="Pfefferle W."/>
            <person name="Puehler A."/>
            <person name="Rey D.A."/>
            <person name="Rueckert C."/>
            <person name="Rupp O."/>
            <person name="Sahm H."/>
            <person name="Wendisch V.F."/>
            <person name="Wiegraebe I."/>
            <person name="Tauch A."/>
        </authorList>
    </citation>
    <scope>NUCLEOTIDE SEQUENCE [LARGE SCALE GENOMIC DNA]</scope>
    <source>
        <strain>ATCC 13032 / DSM 20300 / JCM 1318 / BCRC 11384 / CCUG 27702 / LMG 3730 / NBRC 12168 / NCIMB 10025 / NRRL B-2784 / 534</strain>
    </source>
</reference>
<reference key="5">
    <citation type="journal article" date="1993" name="Mol. Microbiol.">
        <title>Corynebacterium glutamicum arginyl-tRNA synthetase.</title>
        <authorList>
            <person name="Sharp P.M."/>
            <person name="Mitchell K.J."/>
        </authorList>
    </citation>
    <scope>IDENTIFICATION</scope>
</reference>
<name>SYR_CORGL</name>
<evidence type="ECO:0000250" key="1"/>
<evidence type="ECO:0000269" key="2">
    <source>
    </source>
</evidence>
<evidence type="ECO:0000305" key="3"/>
<accession>P35868</accession>
<accession>P41253</accession>
<proteinExistence type="evidence at transcript level"/>
<dbReference type="EC" id="6.1.1.19"/>
<dbReference type="EMBL" id="X54740">
    <property type="protein sequence ID" value="CAA38537.1"/>
    <property type="status" value="ALT_INIT"/>
    <property type="molecule type" value="Genomic_DNA"/>
</dbReference>
<dbReference type="EMBL" id="Z21501">
    <property type="protein sequence ID" value="CAA79710.1"/>
    <property type="molecule type" value="Genomic_DNA"/>
</dbReference>
<dbReference type="EMBL" id="BA000036">
    <property type="protein sequence ID" value="BAB98572.1"/>
    <property type="molecule type" value="Genomic_DNA"/>
</dbReference>
<dbReference type="EMBL" id="BX927151">
    <property type="protein sequence ID" value="CAF19883.1"/>
    <property type="molecule type" value="Genomic_DNA"/>
</dbReference>
<dbReference type="PIR" id="A49936">
    <property type="entry name" value="A49936"/>
</dbReference>
<dbReference type="PIR" id="S12227">
    <property type="entry name" value="S12227"/>
</dbReference>
<dbReference type="RefSeq" id="NP_600405.1">
    <property type="nucleotide sequence ID" value="NC_003450.3"/>
</dbReference>
<dbReference type="RefSeq" id="WP_011014179.1">
    <property type="nucleotide sequence ID" value="NC_006958.1"/>
</dbReference>
<dbReference type="SMR" id="P35868"/>
<dbReference type="STRING" id="196627.cg1333"/>
<dbReference type="GeneID" id="1019162"/>
<dbReference type="KEGG" id="cgb:cg1333"/>
<dbReference type="KEGG" id="cgl:Cgl1179"/>
<dbReference type="PATRIC" id="fig|196627.13.peg.1158"/>
<dbReference type="eggNOG" id="COG0018">
    <property type="taxonomic scope" value="Bacteria"/>
</dbReference>
<dbReference type="HOGENOM" id="CLU_006406_0_1_11"/>
<dbReference type="OrthoDB" id="9803211at2"/>
<dbReference type="BioCyc" id="CORYNE:G18NG-10752-MONOMER"/>
<dbReference type="Proteomes" id="UP000000582">
    <property type="component" value="Chromosome"/>
</dbReference>
<dbReference type="Proteomes" id="UP000001009">
    <property type="component" value="Chromosome"/>
</dbReference>
<dbReference type="GO" id="GO:0005737">
    <property type="term" value="C:cytoplasm"/>
    <property type="evidence" value="ECO:0007669"/>
    <property type="project" value="UniProtKB-SubCell"/>
</dbReference>
<dbReference type="GO" id="GO:0004814">
    <property type="term" value="F:arginine-tRNA ligase activity"/>
    <property type="evidence" value="ECO:0007669"/>
    <property type="project" value="UniProtKB-UniRule"/>
</dbReference>
<dbReference type="GO" id="GO:0005524">
    <property type="term" value="F:ATP binding"/>
    <property type="evidence" value="ECO:0007669"/>
    <property type="project" value="UniProtKB-UniRule"/>
</dbReference>
<dbReference type="GO" id="GO:0006420">
    <property type="term" value="P:arginyl-tRNA aminoacylation"/>
    <property type="evidence" value="ECO:0007669"/>
    <property type="project" value="UniProtKB-UniRule"/>
</dbReference>
<dbReference type="CDD" id="cd00671">
    <property type="entry name" value="ArgRS_core"/>
    <property type="match status" value="1"/>
</dbReference>
<dbReference type="FunFam" id="1.10.730.10:FF:000008">
    <property type="entry name" value="Arginine--tRNA ligase"/>
    <property type="match status" value="1"/>
</dbReference>
<dbReference type="FunFam" id="3.30.1360.70:FF:000003">
    <property type="entry name" value="Arginine--tRNA ligase"/>
    <property type="match status" value="1"/>
</dbReference>
<dbReference type="FunFam" id="3.40.50.620:FF:000062">
    <property type="entry name" value="Arginine--tRNA ligase"/>
    <property type="match status" value="1"/>
</dbReference>
<dbReference type="Gene3D" id="3.30.1360.70">
    <property type="entry name" value="Arginyl tRNA synthetase N-terminal domain"/>
    <property type="match status" value="1"/>
</dbReference>
<dbReference type="Gene3D" id="3.40.50.620">
    <property type="entry name" value="HUPs"/>
    <property type="match status" value="1"/>
</dbReference>
<dbReference type="Gene3D" id="1.10.730.10">
    <property type="entry name" value="Isoleucyl-tRNA Synthetase, Domain 1"/>
    <property type="match status" value="1"/>
</dbReference>
<dbReference type="HAMAP" id="MF_00123">
    <property type="entry name" value="Arg_tRNA_synth"/>
    <property type="match status" value="1"/>
</dbReference>
<dbReference type="InterPro" id="IPR001412">
    <property type="entry name" value="aa-tRNA-synth_I_CS"/>
</dbReference>
<dbReference type="InterPro" id="IPR001278">
    <property type="entry name" value="Arg-tRNA-ligase"/>
</dbReference>
<dbReference type="InterPro" id="IPR005148">
    <property type="entry name" value="Arg-tRNA-synth_N"/>
</dbReference>
<dbReference type="InterPro" id="IPR036695">
    <property type="entry name" value="Arg-tRNA-synth_N_sf"/>
</dbReference>
<dbReference type="InterPro" id="IPR035684">
    <property type="entry name" value="ArgRS_core"/>
</dbReference>
<dbReference type="InterPro" id="IPR008909">
    <property type="entry name" value="DALR_anticod-bd"/>
</dbReference>
<dbReference type="InterPro" id="IPR014729">
    <property type="entry name" value="Rossmann-like_a/b/a_fold"/>
</dbReference>
<dbReference type="InterPro" id="IPR009080">
    <property type="entry name" value="tRNAsynth_Ia_anticodon-bd"/>
</dbReference>
<dbReference type="NCBIfam" id="TIGR00456">
    <property type="entry name" value="argS"/>
    <property type="match status" value="1"/>
</dbReference>
<dbReference type="PANTHER" id="PTHR11956:SF5">
    <property type="entry name" value="ARGININE--TRNA LIGASE, CYTOPLASMIC"/>
    <property type="match status" value="1"/>
</dbReference>
<dbReference type="PANTHER" id="PTHR11956">
    <property type="entry name" value="ARGINYL-TRNA SYNTHETASE"/>
    <property type="match status" value="1"/>
</dbReference>
<dbReference type="Pfam" id="PF03485">
    <property type="entry name" value="Arg_tRNA_synt_N"/>
    <property type="match status" value="1"/>
</dbReference>
<dbReference type="Pfam" id="PF05746">
    <property type="entry name" value="DALR_1"/>
    <property type="match status" value="1"/>
</dbReference>
<dbReference type="Pfam" id="PF00750">
    <property type="entry name" value="tRNA-synt_1d"/>
    <property type="match status" value="1"/>
</dbReference>
<dbReference type="PRINTS" id="PR01038">
    <property type="entry name" value="TRNASYNTHARG"/>
</dbReference>
<dbReference type="SMART" id="SM01016">
    <property type="entry name" value="Arg_tRNA_synt_N"/>
    <property type="match status" value="1"/>
</dbReference>
<dbReference type="SMART" id="SM00836">
    <property type="entry name" value="DALR_1"/>
    <property type="match status" value="1"/>
</dbReference>
<dbReference type="SUPFAM" id="SSF47323">
    <property type="entry name" value="Anticodon-binding domain of a subclass of class I aminoacyl-tRNA synthetases"/>
    <property type="match status" value="1"/>
</dbReference>
<dbReference type="SUPFAM" id="SSF55190">
    <property type="entry name" value="Arginyl-tRNA synthetase (ArgRS), N-terminal 'additional' domain"/>
    <property type="match status" value="1"/>
</dbReference>
<dbReference type="SUPFAM" id="SSF52374">
    <property type="entry name" value="Nucleotidylyl transferase"/>
    <property type="match status" value="1"/>
</dbReference>
<dbReference type="PROSITE" id="PS00178">
    <property type="entry name" value="AA_TRNA_LIGASE_I"/>
    <property type="match status" value="1"/>
</dbReference>
<comment type="catalytic activity">
    <reaction>
        <text>tRNA(Arg) + L-arginine + ATP = L-arginyl-tRNA(Arg) + AMP + diphosphate</text>
        <dbReference type="Rhea" id="RHEA:20301"/>
        <dbReference type="Rhea" id="RHEA-COMP:9658"/>
        <dbReference type="Rhea" id="RHEA-COMP:9673"/>
        <dbReference type="ChEBI" id="CHEBI:30616"/>
        <dbReference type="ChEBI" id="CHEBI:32682"/>
        <dbReference type="ChEBI" id="CHEBI:33019"/>
        <dbReference type="ChEBI" id="CHEBI:78442"/>
        <dbReference type="ChEBI" id="CHEBI:78513"/>
        <dbReference type="ChEBI" id="CHEBI:456215"/>
        <dbReference type="EC" id="6.1.1.19"/>
    </reaction>
</comment>
<comment type="subunit">
    <text evidence="1">Monomer.</text>
</comment>
<comment type="subcellular location">
    <subcellularLocation>
        <location evidence="1">Cytoplasm</location>
    </subcellularLocation>
</comment>
<comment type="induction">
    <text evidence="2">Up-regulated by arginine and repressed by lysine.</text>
</comment>
<comment type="similarity">
    <text evidence="3">Belongs to the class-I aminoacyl-tRNA synthetase family.</text>
</comment>
<comment type="sequence caution" evidence="3">
    <conflict type="erroneous initiation">
        <sequence resource="EMBL-CDS" id="CAA38537"/>
    </conflict>
</comment>
<organism>
    <name type="scientific">Corynebacterium glutamicum (strain ATCC 13032 / DSM 20300 / JCM 1318 / BCRC 11384 / CCUG 27702 / LMG 3730 / NBRC 12168 / NCIMB 10025 / NRRL B-2784 / 534)</name>
    <dbReference type="NCBI Taxonomy" id="196627"/>
    <lineage>
        <taxon>Bacteria</taxon>
        <taxon>Bacillati</taxon>
        <taxon>Actinomycetota</taxon>
        <taxon>Actinomycetes</taxon>
        <taxon>Mycobacteriales</taxon>
        <taxon>Corynebacteriaceae</taxon>
        <taxon>Corynebacterium</taxon>
    </lineage>
</organism>
<gene>
    <name type="primary">argS</name>
    <name type="ordered locus">Cgl1179</name>
    <name type="ordered locus">cg1333</name>
</gene>
<feature type="chain" id="PRO_0000151554" description="Arginine--tRNA ligase">
    <location>
        <begin position="1"/>
        <end position="550"/>
    </location>
</feature>
<feature type="short sequence motif" description="'HIGH' region">
    <location>
        <begin position="130"/>
        <end position="140"/>
    </location>
</feature>
<feature type="sequence conflict" description="In Ref. 2; CAA79710." evidence="3" ref="2">
    <original>G</original>
    <variation>D</variation>
    <location>
        <position position="355"/>
    </location>
</feature>
<feature type="sequence conflict" description="In Ref. 2; CAA79710." evidence="3" ref="2">
    <original>I</original>
    <variation>M</variation>
    <location>
        <position position="412"/>
    </location>
</feature>
<feature type="sequence conflict" description="In Ref. 2; CAA79710." evidence="3" ref="2">
    <original>V</original>
    <variation>A</variation>
    <location>
        <position position="513"/>
    </location>
</feature>
<feature type="sequence conflict" description="In Ref. 2; CAA79710." evidence="3" ref="2">
    <original>H</original>
    <variation>R</variation>
    <location>
        <position position="540"/>
    </location>
</feature>
<keyword id="KW-0030">Aminoacyl-tRNA synthetase</keyword>
<keyword id="KW-0067">ATP-binding</keyword>
<keyword id="KW-0963">Cytoplasm</keyword>
<keyword id="KW-0436">Ligase</keyword>
<keyword id="KW-0547">Nucleotide-binding</keyword>
<keyword id="KW-0648">Protein biosynthesis</keyword>
<keyword id="KW-1185">Reference proteome</keyword>
<sequence>MTPADLATLIKETAVEVLTSRELDTSVLPEQVVVERPRNPEHGDYATNIALQVAKKVGQNPRDLATWLAEALAADDAIDSAEIAGPGFLNIRLAAAAQGEIVAKILAQGETFGNSDHLSHLDVNLEFVSANPTGPIHLGGTRWAAVGDSLGRVLEASGAKVTREYYFNDHGRQIDRFALSLLAAAKGEPTPEDGYGGEYIKEIAEAIVEKHPEALALEPAATQELFRAEGVEMMFEHIKSSLHEFGTDFDVYYHENSLFESGAVDKAVQVLKDNGNLYENEGAWWLRSTEFGDDKDRVVIKSDGDAAYIAGDIAYVADKFSRGHNLNIYMLGADHHGYIARLKAAAAALGYKPEGVEVLIGQMVNLLRDGKAVRMSKRAGTVVTLDDLVEAIGIDAARYSLIRSSVDSSLDIDLGLWESQSSDNPVYYVQYGHARLCSIARKAETLGVTEEGADLSLLTHDREGDLIRTLGEFPAVVKAAADLREPHRIARYAEELAGTFHRFYDSCHILPKVDEDTAPIHTARLALAAATRQTLANALHLVGVSAPEKM</sequence>
<protein>
    <recommendedName>
        <fullName>Arginine--tRNA ligase</fullName>
        <ecNumber>6.1.1.19</ecNumber>
    </recommendedName>
    <alternativeName>
        <fullName>Arginyl-tRNA synthetase</fullName>
        <shortName>ArgRS</shortName>
    </alternativeName>
</protein>